<feature type="chain" id="PRO_0000270612" description="Histone-lysine N-methyltransferase, H3 lysine-79 specific">
    <location>
        <begin position="1"/>
        <end position="501"/>
    </location>
</feature>
<feature type="domain" description="DOT1" evidence="3">
    <location>
        <begin position="180"/>
        <end position="501"/>
    </location>
</feature>
<feature type="region of interest" description="Disordered" evidence="4">
    <location>
        <begin position="1"/>
        <end position="121"/>
    </location>
</feature>
<feature type="compositionally biased region" description="Basic residues" evidence="4">
    <location>
        <begin position="71"/>
        <end position="83"/>
    </location>
</feature>
<feature type="compositionally biased region" description="Basic and acidic residues" evidence="4">
    <location>
        <begin position="105"/>
        <end position="121"/>
    </location>
</feature>
<feature type="binding site" evidence="3">
    <location>
        <begin position="307"/>
        <end position="310"/>
    </location>
    <ligand>
        <name>S-adenosyl-L-methionine</name>
        <dbReference type="ChEBI" id="CHEBI:59789"/>
    </ligand>
</feature>
<feature type="binding site" evidence="3">
    <location>
        <begin position="330"/>
        <end position="339"/>
    </location>
    <ligand>
        <name>S-adenosyl-L-methionine</name>
        <dbReference type="ChEBI" id="CHEBI:59789"/>
    </ligand>
</feature>
<feature type="binding site" evidence="3">
    <location>
        <position position="356"/>
    </location>
    <ligand>
        <name>S-adenosyl-L-methionine</name>
        <dbReference type="ChEBI" id="CHEBI:59789"/>
    </ligand>
</feature>
<feature type="binding site" evidence="3">
    <location>
        <begin position="392"/>
        <end position="393"/>
    </location>
    <ligand>
        <name>S-adenosyl-L-methionine</name>
        <dbReference type="ChEBI" id="CHEBI:59789"/>
    </ligand>
</feature>
<name>DOT1_EMENI</name>
<dbReference type="EC" id="2.1.1.360"/>
<dbReference type="EMBL" id="AACD01000003">
    <property type="protein sequence ID" value="EAA65269.1"/>
    <property type="molecule type" value="Genomic_DNA"/>
</dbReference>
<dbReference type="EMBL" id="BN001308">
    <property type="protein sequence ID" value="CBF90218.1"/>
    <property type="molecule type" value="Genomic_DNA"/>
</dbReference>
<dbReference type="RefSeq" id="XP_657695.1">
    <property type="nucleotide sequence ID" value="XM_652603.1"/>
</dbReference>
<dbReference type="SMR" id="Q5BH89"/>
<dbReference type="FunCoup" id="Q5BH89">
    <property type="interactions" value="29"/>
</dbReference>
<dbReference type="STRING" id="227321.Q5BH89"/>
<dbReference type="EnsemblFungi" id="CBF90218">
    <property type="protein sequence ID" value="CBF90218"/>
    <property type="gene ID" value="ANIA_00091"/>
</dbReference>
<dbReference type="KEGG" id="ani:ANIA_00091"/>
<dbReference type="VEuPathDB" id="FungiDB:AN0091"/>
<dbReference type="eggNOG" id="KOG3924">
    <property type="taxonomic scope" value="Eukaryota"/>
</dbReference>
<dbReference type="HOGENOM" id="CLU_027287_2_0_1"/>
<dbReference type="InParanoid" id="Q5BH89"/>
<dbReference type="OMA" id="VQQKNYW"/>
<dbReference type="OrthoDB" id="443402at2759"/>
<dbReference type="Proteomes" id="UP000000560">
    <property type="component" value="Chromosome VIII"/>
</dbReference>
<dbReference type="GO" id="GO:0000781">
    <property type="term" value="C:chromosome, telomeric region"/>
    <property type="evidence" value="ECO:0007669"/>
    <property type="project" value="GOC"/>
</dbReference>
<dbReference type="GO" id="GO:0000786">
    <property type="term" value="C:nucleosome"/>
    <property type="evidence" value="ECO:0007669"/>
    <property type="project" value="InterPro"/>
</dbReference>
<dbReference type="GO" id="GO:0005634">
    <property type="term" value="C:nucleus"/>
    <property type="evidence" value="ECO:0000318"/>
    <property type="project" value="GO_Central"/>
</dbReference>
<dbReference type="GO" id="GO:0042393">
    <property type="term" value="F:histone binding"/>
    <property type="evidence" value="ECO:0007669"/>
    <property type="project" value="InterPro"/>
</dbReference>
<dbReference type="GO" id="GO:0031151">
    <property type="term" value="F:histone H3K79 methyltransferase activity"/>
    <property type="evidence" value="ECO:0000318"/>
    <property type="project" value="GO_Central"/>
</dbReference>
<dbReference type="GO" id="GO:0140956">
    <property type="term" value="F:histone H3K79 trimethyltransferase activity"/>
    <property type="evidence" value="ECO:0007669"/>
    <property type="project" value="UniProtKB-EC"/>
</dbReference>
<dbReference type="GO" id="GO:0000077">
    <property type="term" value="P:DNA damage checkpoint signaling"/>
    <property type="evidence" value="ECO:0000318"/>
    <property type="project" value="GO_Central"/>
</dbReference>
<dbReference type="GO" id="GO:0006281">
    <property type="term" value="P:DNA repair"/>
    <property type="evidence" value="ECO:0000318"/>
    <property type="project" value="GO_Central"/>
</dbReference>
<dbReference type="GO" id="GO:0032259">
    <property type="term" value="P:methylation"/>
    <property type="evidence" value="ECO:0007669"/>
    <property type="project" value="UniProtKB-KW"/>
</dbReference>
<dbReference type="GO" id="GO:0031509">
    <property type="term" value="P:subtelomeric heterochromatin formation"/>
    <property type="evidence" value="ECO:0000318"/>
    <property type="project" value="GO_Central"/>
</dbReference>
<dbReference type="CDD" id="cd02440">
    <property type="entry name" value="AdoMet_MTases"/>
    <property type="match status" value="1"/>
</dbReference>
<dbReference type="FunFam" id="3.40.50.150:FF:000033">
    <property type="entry name" value="Histone-lysine N-methyltransferase, H3 lysine-79 specific"/>
    <property type="match status" value="1"/>
</dbReference>
<dbReference type="Gene3D" id="1.10.260.170">
    <property type="match status" value="1"/>
</dbReference>
<dbReference type="Gene3D" id="3.40.50.150">
    <property type="entry name" value="Vaccinia Virus protein VP39"/>
    <property type="match status" value="1"/>
</dbReference>
<dbReference type="InterPro" id="IPR021162">
    <property type="entry name" value="Dot1"/>
</dbReference>
<dbReference type="InterPro" id="IPR025789">
    <property type="entry name" value="DOT1_dom"/>
</dbReference>
<dbReference type="InterPro" id="IPR030445">
    <property type="entry name" value="H3-K79_meTrfase"/>
</dbReference>
<dbReference type="InterPro" id="IPR029063">
    <property type="entry name" value="SAM-dependent_MTases_sf"/>
</dbReference>
<dbReference type="PANTHER" id="PTHR21451">
    <property type="entry name" value="HISTONE H3 METHYLTRANSFERASE"/>
    <property type="match status" value="1"/>
</dbReference>
<dbReference type="PANTHER" id="PTHR21451:SF0">
    <property type="entry name" value="HISTONE-LYSINE N-METHYLTRANSFERASE, H3 LYSINE-79 SPECIFIC"/>
    <property type="match status" value="1"/>
</dbReference>
<dbReference type="Pfam" id="PF08123">
    <property type="entry name" value="DOT1"/>
    <property type="match status" value="1"/>
</dbReference>
<dbReference type="PIRSF" id="PIRSF017570">
    <property type="entry name" value="Histone_H3-K79_MeTrfase"/>
    <property type="match status" value="1"/>
</dbReference>
<dbReference type="SUPFAM" id="SSF53335">
    <property type="entry name" value="S-adenosyl-L-methionine-dependent methyltransferases"/>
    <property type="match status" value="1"/>
</dbReference>
<dbReference type="PROSITE" id="PS51569">
    <property type="entry name" value="DOT1"/>
    <property type="match status" value="1"/>
</dbReference>
<organism>
    <name type="scientific">Emericella nidulans (strain FGSC A4 / ATCC 38163 / CBS 112.46 / NRRL 194 / M139)</name>
    <name type="common">Aspergillus nidulans</name>
    <dbReference type="NCBI Taxonomy" id="227321"/>
    <lineage>
        <taxon>Eukaryota</taxon>
        <taxon>Fungi</taxon>
        <taxon>Dikarya</taxon>
        <taxon>Ascomycota</taxon>
        <taxon>Pezizomycotina</taxon>
        <taxon>Eurotiomycetes</taxon>
        <taxon>Eurotiomycetidae</taxon>
        <taxon>Eurotiales</taxon>
        <taxon>Aspergillaceae</taxon>
        <taxon>Aspergillus</taxon>
        <taxon>Aspergillus subgen. Nidulantes</taxon>
    </lineage>
</organism>
<protein>
    <recommendedName>
        <fullName>Histone-lysine N-methyltransferase, H3 lysine-79 specific</fullName>
        <ecNumber>2.1.1.360</ecNumber>
    </recommendedName>
    <alternativeName>
        <fullName>Histone H3-K79 methyltransferase</fullName>
        <shortName>H3-K79-HMTase</shortName>
    </alternativeName>
</protein>
<sequence>MGGFDYLQKGGTGFTLQVKKPQIRRVVQTRPAAPSPSANKATPRTVPSGPQKKTPETASRSVTGERGFSPSKRRLTPLRNRKRPTPEQRLSSDDDDDGSDTDTSLELRKRARTGESAEPDYGRRLRSLKAFSGDETRSLPIVHASEITSVQKPGKFKPAFENMNQTSEIFLQYPSATPKERYEAVVPRDDDEFKPLDDIVQVIETVTQAYIPEDELDEFNNESTGIKRRLRRALARGSEREFRESVKDYNVAIERLRRSGSIAKKLDATYRLSLPHVERILTQIYSRTVSPRVDSLRQYENGTDNVYGELLPRFISTIFKETGLKSNHVFVDLGSGVGNVVLQAALEIGCESWGCEMMQNACDLAELQQAEFKARCRLWGIAPGKTHLVRGDFLKEQSIIDVLKRADVVLINNQAFTPQLNNELINHFLDMKEGCQIVSLKSFVPVGHKIQSRNLNSPINLLTVKQRQYWSNSVSWTDVGGSYFIATKDSSRLKAFSESLA</sequence>
<evidence type="ECO:0000250" key="1"/>
<evidence type="ECO:0000250" key="2">
    <source>
        <dbReference type="UniProtKB" id="Q04089"/>
    </source>
</evidence>
<evidence type="ECO:0000255" key="3">
    <source>
        <dbReference type="PROSITE-ProRule" id="PRU00902"/>
    </source>
</evidence>
<evidence type="ECO:0000256" key="4">
    <source>
        <dbReference type="SAM" id="MobiDB-lite"/>
    </source>
</evidence>
<gene>
    <name type="primary">dot1</name>
    <name type="ORF">AN0091</name>
</gene>
<accession>Q5BH89</accession>
<accession>C8VQY5</accession>
<keyword id="KW-0156">Chromatin regulator</keyword>
<keyword id="KW-0489">Methyltransferase</keyword>
<keyword id="KW-0539">Nucleus</keyword>
<keyword id="KW-1185">Reference proteome</keyword>
<keyword id="KW-0677">Repeat</keyword>
<keyword id="KW-0949">S-adenosyl-L-methionine</keyword>
<keyword id="KW-0804">Transcription</keyword>
<keyword id="KW-0805">Transcription regulation</keyword>
<keyword id="KW-0808">Transferase</keyword>
<proteinExistence type="inferred from homology"/>
<reference key="1">
    <citation type="journal article" date="2005" name="Nature">
        <title>Sequencing of Aspergillus nidulans and comparative analysis with A. fumigatus and A. oryzae.</title>
        <authorList>
            <person name="Galagan J.E."/>
            <person name="Calvo S.E."/>
            <person name="Cuomo C."/>
            <person name="Ma L.-J."/>
            <person name="Wortman J.R."/>
            <person name="Batzoglou S."/>
            <person name="Lee S.-I."/>
            <person name="Bastuerkmen M."/>
            <person name="Spevak C.C."/>
            <person name="Clutterbuck J."/>
            <person name="Kapitonov V."/>
            <person name="Jurka J."/>
            <person name="Scazzocchio C."/>
            <person name="Farman M.L."/>
            <person name="Butler J."/>
            <person name="Purcell S."/>
            <person name="Harris S."/>
            <person name="Braus G.H."/>
            <person name="Draht O."/>
            <person name="Busch S."/>
            <person name="D'Enfert C."/>
            <person name="Bouchier C."/>
            <person name="Goldman G.H."/>
            <person name="Bell-Pedersen D."/>
            <person name="Griffiths-Jones S."/>
            <person name="Doonan J.H."/>
            <person name="Yu J."/>
            <person name="Vienken K."/>
            <person name="Pain A."/>
            <person name="Freitag M."/>
            <person name="Selker E.U."/>
            <person name="Archer D.B."/>
            <person name="Penalva M.A."/>
            <person name="Oakley B.R."/>
            <person name="Momany M."/>
            <person name="Tanaka T."/>
            <person name="Kumagai T."/>
            <person name="Asai K."/>
            <person name="Machida M."/>
            <person name="Nierman W.C."/>
            <person name="Denning D.W."/>
            <person name="Caddick M.X."/>
            <person name="Hynes M."/>
            <person name="Paoletti M."/>
            <person name="Fischer R."/>
            <person name="Miller B.L."/>
            <person name="Dyer P.S."/>
            <person name="Sachs M.S."/>
            <person name="Osmani S.A."/>
            <person name="Birren B.W."/>
        </authorList>
    </citation>
    <scope>NUCLEOTIDE SEQUENCE [LARGE SCALE GENOMIC DNA]</scope>
    <source>
        <strain>FGSC A4 / ATCC 38163 / CBS 112.46 / NRRL 194 / M139</strain>
    </source>
</reference>
<reference key="2">
    <citation type="journal article" date="2009" name="Fungal Genet. Biol.">
        <title>The 2008 update of the Aspergillus nidulans genome annotation: a community effort.</title>
        <authorList>
            <person name="Wortman J.R."/>
            <person name="Gilsenan J.M."/>
            <person name="Joardar V."/>
            <person name="Deegan J."/>
            <person name="Clutterbuck J."/>
            <person name="Andersen M.R."/>
            <person name="Archer D."/>
            <person name="Bencina M."/>
            <person name="Braus G."/>
            <person name="Coutinho P."/>
            <person name="von Dohren H."/>
            <person name="Doonan J."/>
            <person name="Driessen A.J."/>
            <person name="Durek P."/>
            <person name="Espeso E."/>
            <person name="Fekete E."/>
            <person name="Flipphi M."/>
            <person name="Estrada C.G."/>
            <person name="Geysens S."/>
            <person name="Goldman G."/>
            <person name="de Groot P.W."/>
            <person name="Hansen K."/>
            <person name="Harris S.D."/>
            <person name="Heinekamp T."/>
            <person name="Helmstaedt K."/>
            <person name="Henrissat B."/>
            <person name="Hofmann G."/>
            <person name="Homan T."/>
            <person name="Horio T."/>
            <person name="Horiuchi H."/>
            <person name="James S."/>
            <person name="Jones M."/>
            <person name="Karaffa L."/>
            <person name="Karanyi Z."/>
            <person name="Kato M."/>
            <person name="Keller N."/>
            <person name="Kelly D.E."/>
            <person name="Kiel J.A."/>
            <person name="Kim J.M."/>
            <person name="van der Klei I.J."/>
            <person name="Klis F.M."/>
            <person name="Kovalchuk A."/>
            <person name="Krasevec N."/>
            <person name="Kubicek C.P."/>
            <person name="Liu B."/>
            <person name="Maccabe A."/>
            <person name="Meyer V."/>
            <person name="Mirabito P."/>
            <person name="Miskei M."/>
            <person name="Mos M."/>
            <person name="Mullins J."/>
            <person name="Nelson D.R."/>
            <person name="Nielsen J."/>
            <person name="Oakley B.R."/>
            <person name="Osmani S.A."/>
            <person name="Pakula T."/>
            <person name="Paszewski A."/>
            <person name="Paulsen I."/>
            <person name="Pilsyk S."/>
            <person name="Pocsi I."/>
            <person name="Punt P.J."/>
            <person name="Ram A.F."/>
            <person name="Ren Q."/>
            <person name="Robellet X."/>
            <person name="Robson G."/>
            <person name="Seiboth B."/>
            <person name="van Solingen P."/>
            <person name="Specht T."/>
            <person name="Sun J."/>
            <person name="Taheri-Talesh N."/>
            <person name="Takeshita N."/>
            <person name="Ussery D."/>
            <person name="vanKuyk P.A."/>
            <person name="Visser H."/>
            <person name="van de Vondervoort P.J."/>
            <person name="de Vries R.P."/>
            <person name="Walton J."/>
            <person name="Xiang X."/>
            <person name="Xiong Y."/>
            <person name="Zeng A.P."/>
            <person name="Brandt B.W."/>
            <person name="Cornell M.J."/>
            <person name="van den Hondel C.A."/>
            <person name="Visser J."/>
            <person name="Oliver S.G."/>
            <person name="Turner G."/>
        </authorList>
    </citation>
    <scope>GENOME REANNOTATION</scope>
    <source>
        <strain>FGSC A4 / ATCC 38163 / CBS 112.46 / NRRL 194 / M139</strain>
    </source>
</reference>
<comment type="function">
    <text evidence="2">Histone methyltransferase that specifically trimethylates histone H3 to form H3K79me3. This methylation is required for telomere silencing and for the pachytene checkpoint during the meiotic cell cycle by allowing the recruitment of RAD9 to double strand breaks. Nucleosomes are preferred as substrate compared to free histone.</text>
</comment>
<comment type="catalytic activity">
    <reaction evidence="2 3">
        <text>L-lysyl(79)-[histone H3] + 3 S-adenosyl-L-methionine = N(6),N(6),N(6)-trimethyl-L-lysyl(79)-[histone H3] + 3 S-adenosyl-L-homocysteine + 3 H(+)</text>
        <dbReference type="Rhea" id="RHEA:60328"/>
        <dbReference type="Rhea" id="RHEA-COMP:15549"/>
        <dbReference type="Rhea" id="RHEA-COMP:15552"/>
        <dbReference type="ChEBI" id="CHEBI:15378"/>
        <dbReference type="ChEBI" id="CHEBI:29969"/>
        <dbReference type="ChEBI" id="CHEBI:57856"/>
        <dbReference type="ChEBI" id="CHEBI:59789"/>
        <dbReference type="ChEBI" id="CHEBI:61961"/>
        <dbReference type="EC" id="2.1.1.360"/>
    </reaction>
</comment>
<comment type="activity regulation">
    <text evidence="1">Ubiquitination of histone H2B to form H2BK123ub1 is required for efficient DOT1 methyltransferase activity on histone H3.</text>
</comment>
<comment type="subcellular location">
    <subcellularLocation>
        <location evidence="1">Nucleus</location>
    </subcellularLocation>
</comment>
<comment type="miscellaneous">
    <text>In contrast to other lysine histone methyltransferases, it does not contain a SET domain, suggesting the existence of another mechanism for methylation of lysine residues of histones.</text>
</comment>
<comment type="similarity">
    <text evidence="3">Belongs to the class I-like SAM-binding methyltransferase superfamily. DOT1 family.</text>
</comment>